<protein>
    <recommendedName>
        <fullName evidence="1">Phosphoglycerate kinase</fullName>
        <ecNumber evidence="1">2.7.2.3</ecNumber>
    </recommendedName>
</protein>
<evidence type="ECO:0000255" key="1">
    <source>
        <dbReference type="HAMAP-Rule" id="MF_00145"/>
    </source>
</evidence>
<reference key="1">
    <citation type="journal article" date="2003" name="Microbiology">
        <title>The complete genome sequence of the avian pathogen Mycoplasma gallisepticum strain R(low).</title>
        <authorList>
            <person name="Papazisi L."/>
            <person name="Gorton T.S."/>
            <person name="Kutish G."/>
            <person name="Markham P.F."/>
            <person name="Browning G.F."/>
            <person name="Nguyen D.K."/>
            <person name="Swartzell S."/>
            <person name="Madan A."/>
            <person name="Mahairas G."/>
            <person name="Geary S.J."/>
        </authorList>
    </citation>
    <scope>NUCLEOTIDE SEQUENCE [LARGE SCALE GENOMIC DNA]</scope>
    <source>
        <strain>R(low / passage 15 / clone 2)</strain>
    </source>
</reference>
<comment type="catalytic activity">
    <reaction evidence="1">
        <text>(2R)-3-phosphoglycerate + ATP = (2R)-3-phospho-glyceroyl phosphate + ADP</text>
        <dbReference type="Rhea" id="RHEA:14801"/>
        <dbReference type="ChEBI" id="CHEBI:30616"/>
        <dbReference type="ChEBI" id="CHEBI:57604"/>
        <dbReference type="ChEBI" id="CHEBI:58272"/>
        <dbReference type="ChEBI" id="CHEBI:456216"/>
        <dbReference type="EC" id="2.7.2.3"/>
    </reaction>
</comment>
<comment type="pathway">
    <text evidence="1">Carbohydrate degradation; glycolysis; pyruvate from D-glyceraldehyde 3-phosphate: step 2/5.</text>
</comment>
<comment type="subunit">
    <text evidence="1">Monomer.</text>
</comment>
<comment type="subcellular location">
    <subcellularLocation>
        <location evidence="1">Cytoplasm</location>
    </subcellularLocation>
</comment>
<comment type="similarity">
    <text evidence="1">Belongs to the phosphoglycerate kinase family.</text>
</comment>
<dbReference type="EC" id="2.7.2.3" evidence="1"/>
<dbReference type="EMBL" id="AE015450">
    <property type="protein sequence ID" value="AAP56662.1"/>
    <property type="molecule type" value="Genomic_DNA"/>
</dbReference>
<dbReference type="RefSeq" id="WP_011113553.1">
    <property type="nucleotide sequence ID" value="NC_004829.2"/>
</dbReference>
<dbReference type="SMR" id="Q7NBG7"/>
<dbReference type="KEGG" id="mga:MGA_1187"/>
<dbReference type="PATRIC" id="fig|233150.7.peg.346"/>
<dbReference type="HOGENOM" id="CLU_025427_0_2_14"/>
<dbReference type="OrthoDB" id="9808460at2"/>
<dbReference type="UniPathway" id="UPA00109">
    <property type="reaction ID" value="UER00185"/>
</dbReference>
<dbReference type="Proteomes" id="UP000001418">
    <property type="component" value="Chromosome"/>
</dbReference>
<dbReference type="GO" id="GO:0005829">
    <property type="term" value="C:cytosol"/>
    <property type="evidence" value="ECO:0007669"/>
    <property type="project" value="TreeGrafter"/>
</dbReference>
<dbReference type="GO" id="GO:0043531">
    <property type="term" value="F:ADP binding"/>
    <property type="evidence" value="ECO:0007669"/>
    <property type="project" value="TreeGrafter"/>
</dbReference>
<dbReference type="GO" id="GO:0005524">
    <property type="term" value="F:ATP binding"/>
    <property type="evidence" value="ECO:0007669"/>
    <property type="project" value="UniProtKB-KW"/>
</dbReference>
<dbReference type="GO" id="GO:0004618">
    <property type="term" value="F:phosphoglycerate kinase activity"/>
    <property type="evidence" value="ECO:0007669"/>
    <property type="project" value="UniProtKB-UniRule"/>
</dbReference>
<dbReference type="GO" id="GO:0006094">
    <property type="term" value="P:gluconeogenesis"/>
    <property type="evidence" value="ECO:0007669"/>
    <property type="project" value="TreeGrafter"/>
</dbReference>
<dbReference type="GO" id="GO:0006096">
    <property type="term" value="P:glycolytic process"/>
    <property type="evidence" value="ECO:0007669"/>
    <property type="project" value="UniProtKB-UniRule"/>
</dbReference>
<dbReference type="FunFam" id="3.40.50.1260:FF:000001">
    <property type="entry name" value="Phosphoglycerate kinase"/>
    <property type="match status" value="1"/>
</dbReference>
<dbReference type="Gene3D" id="3.40.50.1260">
    <property type="entry name" value="Phosphoglycerate kinase, N-terminal domain"/>
    <property type="match status" value="2"/>
</dbReference>
<dbReference type="HAMAP" id="MF_00145">
    <property type="entry name" value="Phosphoglyc_kinase"/>
    <property type="match status" value="1"/>
</dbReference>
<dbReference type="InterPro" id="IPR001576">
    <property type="entry name" value="Phosphoglycerate_kinase"/>
</dbReference>
<dbReference type="InterPro" id="IPR015911">
    <property type="entry name" value="Phosphoglycerate_kinase_CS"/>
</dbReference>
<dbReference type="InterPro" id="IPR015824">
    <property type="entry name" value="Phosphoglycerate_kinase_N"/>
</dbReference>
<dbReference type="InterPro" id="IPR036043">
    <property type="entry name" value="Phosphoglycerate_kinase_sf"/>
</dbReference>
<dbReference type="PANTHER" id="PTHR11406">
    <property type="entry name" value="PHOSPHOGLYCERATE KINASE"/>
    <property type="match status" value="1"/>
</dbReference>
<dbReference type="PANTHER" id="PTHR11406:SF23">
    <property type="entry name" value="PHOSPHOGLYCERATE KINASE 1, CHLOROPLASTIC-RELATED"/>
    <property type="match status" value="1"/>
</dbReference>
<dbReference type="Pfam" id="PF00162">
    <property type="entry name" value="PGK"/>
    <property type="match status" value="1"/>
</dbReference>
<dbReference type="PIRSF" id="PIRSF000724">
    <property type="entry name" value="Pgk"/>
    <property type="match status" value="1"/>
</dbReference>
<dbReference type="PRINTS" id="PR00477">
    <property type="entry name" value="PHGLYCKINASE"/>
</dbReference>
<dbReference type="SUPFAM" id="SSF53748">
    <property type="entry name" value="Phosphoglycerate kinase"/>
    <property type="match status" value="1"/>
</dbReference>
<dbReference type="PROSITE" id="PS00111">
    <property type="entry name" value="PGLYCERATE_KINASE"/>
    <property type="match status" value="1"/>
</dbReference>
<accession>Q7NBG7</accession>
<gene>
    <name evidence="1" type="primary">pgk</name>
    <name type="ordered locus">MYCGA3120</name>
    <name type="ORF">MGA_1187</name>
</gene>
<proteinExistence type="inferred from homology"/>
<organism>
    <name type="scientific">Mycoplasmoides gallisepticum (strain R(low / passage 15 / clone 2))</name>
    <name type="common">Mycoplasma gallisepticum</name>
    <dbReference type="NCBI Taxonomy" id="710127"/>
    <lineage>
        <taxon>Bacteria</taxon>
        <taxon>Bacillati</taxon>
        <taxon>Mycoplasmatota</taxon>
        <taxon>Mycoplasmoidales</taxon>
        <taxon>Mycoplasmoidaceae</taxon>
        <taxon>Mycoplasmoides</taxon>
    </lineage>
</organism>
<sequence length="413" mass="45525">MINYNKKTLKDVDLKDKTVIVRVDFNVPIKDNKVIDDTRIVQALDTIKYLIEQNCKIVLLSHLSRIKSLEDISSKKKSLRPVYENLKTKLNNVKFLEENVGYDVVEAVKQLKHQEVLLLENTRYNDVDNQGEVVKKESKNSPELGRFWASLADVFVNDAFGTSHRAHASNVGIAANISQSCIGFLVQKELEALSKLTNNPQRPFVVILGGAKVSDKLKVIESLLKSADQILIGGGMVNTFNKAKGYHIGKSLFEPEMLETAKKILAEDKDNKIILATDQMVTKASTITDIKTAPAGKCVFAKDEAENEDFEALDIGDESIKTFKSYIAKAKSIFWNGPLGVFENPNYERGSYEIAKAISESDSYSVIGGGDSAAAANQFKLADKFSFVSTGGGASLTFMEQTVLPGIEAIQSK</sequence>
<feature type="chain" id="PRO_0000145964" description="Phosphoglycerate kinase">
    <location>
        <begin position="1"/>
        <end position="413"/>
    </location>
</feature>
<feature type="binding site" evidence="1">
    <location>
        <begin position="24"/>
        <end position="26"/>
    </location>
    <ligand>
        <name>substrate</name>
    </ligand>
</feature>
<feature type="binding site" evidence="1">
    <location>
        <position position="39"/>
    </location>
    <ligand>
        <name>substrate</name>
    </ligand>
</feature>
<feature type="binding site" evidence="1">
    <location>
        <begin position="62"/>
        <end position="65"/>
    </location>
    <ligand>
        <name>substrate</name>
    </ligand>
</feature>
<feature type="binding site" evidence="1">
    <location>
        <position position="123"/>
    </location>
    <ligand>
        <name>substrate</name>
    </ligand>
</feature>
<feature type="binding site" evidence="1">
    <location>
        <position position="165"/>
    </location>
    <ligand>
        <name>substrate</name>
    </ligand>
</feature>
<feature type="binding site" evidence="1">
    <location>
        <position position="216"/>
    </location>
    <ligand>
        <name>ATP</name>
        <dbReference type="ChEBI" id="CHEBI:30616"/>
    </ligand>
</feature>
<feature type="binding site" evidence="1">
    <location>
        <position position="343"/>
    </location>
    <ligand>
        <name>ATP</name>
        <dbReference type="ChEBI" id="CHEBI:30616"/>
    </ligand>
</feature>
<feature type="binding site" evidence="1">
    <location>
        <begin position="369"/>
        <end position="372"/>
    </location>
    <ligand>
        <name>ATP</name>
        <dbReference type="ChEBI" id="CHEBI:30616"/>
    </ligand>
</feature>
<name>PGK_MYCGA</name>
<keyword id="KW-0067">ATP-binding</keyword>
<keyword id="KW-0963">Cytoplasm</keyword>
<keyword id="KW-0324">Glycolysis</keyword>
<keyword id="KW-0418">Kinase</keyword>
<keyword id="KW-0547">Nucleotide-binding</keyword>
<keyword id="KW-1185">Reference proteome</keyword>
<keyword id="KW-0808">Transferase</keyword>